<sequence length="132" mass="14825">MSKIDKPLDSWREELTEEQFHICRLGGTERAFSGEYHATKTPGIYHCTCCGTALFDSDAKYDSGSGWPSYFQPVDAEAVRELDDFSHGMHRIEVRCGRCDAHLGHVFPDGPRPTGLRYCINSASLKLVPRES</sequence>
<keyword id="KW-0479">Metal-binding</keyword>
<keyword id="KW-0560">Oxidoreductase</keyword>
<keyword id="KW-0862">Zinc</keyword>
<evidence type="ECO:0000255" key="1">
    <source>
        <dbReference type="HAMAP-Rule" id="MF_01400"/>
    </source>
</evidence>
<evidence type="ECO:0000255" key="2">
    <source>
        <dbReference type="PROSITE-ProRule" id="PRU01126"/>
    </source>
</evidence>
<comment type="catalytic activity">
    <reaction evidence="1">
        <text>L-methionyl-[protein] + [thioredoxin]-disulfide + H2O = L-methionyl-(R)-S-oxide-[protein] + [thioredoxin]-dithiol</text>
        <dbReference type="Rhea" id="RHEA:24164"/>
        <dbReference type="Rhea" id="RHEA-COMP:10698"/>
        <dbReference type="Rhea" id="RHEA-COMP:10700"/>
        <dbReference type="Rhea" id="RHEA-COMP:12313"/>
        <dbReference type="Rhea" id="RHEA-COMP:12314"/>
        <dbReference type="ChEBI" id="CHEBI:15377"/>
        <dbReference type="ChEBI" id="CHEBI:16044"/>
        <dbReference type="ChEBI" id="CHEBI:29950"/>
        <dbReference type="ChEBI" id="CHEBI:45764"/>
        <dbReference type="ChEBI" id="CHEBI:50058"/>
        <dbReference type="EC" id="1.8.4.12"/>
    </reaction>
</comment>
<comment type="cofactor">
    <cofactor evidence="1">
        <name>Zn(2+)</name>
        <dbReference type="ChEBI" id="CHEBI:29105"/>
    </cofactor>
    <text evidence="1">Binds 1 zinc ion per subunit. The zinc ion is important for the structural integrity of the protein.</text>
</comment>
<comment type="similarity">
    <text evidence="1">Belongs to the MsrB Met sulfoxide reductase family.</text>
</comment>
<feature type="chain" id="PRO_1000068283" description="Peptide methionine sulfoxide reductase MsrB">
    <location>
        <begin position="1"/>
        <end position="132"/>
    </location>
</feature>
<feature type="domain" description="MsrB" evidence="2">
    <location>
        <begin position="8"/>
        <end position="130"/>
    </location>
</feature>
<feature type="active site" description="Nucleophile" evidence="2">
    <location>
        <position position="119"/>
    </location>
</feature>
<feature type="binding site" evidence="2">
    <location>
        <position position="47"/>
    </location>
    <ligand>
        <name>Zn(2+)</name>
        <dbReference type="ChEBI" id="CHEBI:29105"/>
    </ligand>
</feature>
<feature type="binding site" evidence="2">
    <location>
        <position position="50"/>
    </location>
    <ligand>
        <name>Zn(2+)</name>
        <dbReference type="ChEBI" id="CHEBI:29105"/>
    </ligand>
</feature>
<feature type="binding site" evidence="2">
    <location>
        <position position="96"/>
    </location>
    <ligand>
        <name>Zn(2+)</name>
        <dbReference type="ChEBI" id="CHEBI:29105"/>
    </ligand>
</feature>
<feature type="binding site" evidence="2">
    <location>
        <position position="99"/>
    </location>
    <ligand>
        <name>Zn(2+)</name>
        <dbReference type="ChEBI" id="CHEBI:29105"/>
    </ligand>
</feature>
<reference key="1">
    <citation type="journal article" date="2006" name="Genome Biol.">
        <title>Genomic analysis reveals that Pseudomonas aeruginosa virulence is combinatorial.</title>
        <authorList>
            <person name="Lee D.G."/>
            <person name="Urbach J.M."/>
            <person name="Wu G."/>
            <person name="Liberati N.T."/>
            <person name="Feinbaum R.L."/>
            <person name="Miyata S."/>
            <person name="Diggins L.T."/>
            <person name="He J."/>
            <person name="Saucier M."/>
            <person name="Deziel E."/>
            <person name="Friedman L."/>
            <person name="Li L."/>
            <person name="Grills G."/>
            <person name="Montgomery K."/>
            <person name="Kucherlapati R."/>
            <person name="Rahme L.G."/>
            <person name="Ausubel F.M."/>
        </authorList>
    </citation>
    <scope>NUCLEOTIDE SEQUENCE [LARGE SCALE GENOMIC DNA]</scope>
    <source>
        <strain>UCBPP-PA14</strain>
    </source>
</reference>
<proteinExistence type="inferred from homology"/>
<organism>
    <name type="scientific">Pseudomonas aeruginosa (strain UCBPP-PA14)</name>
    <dbReference type="NCBI Taxonomy" id="208963"/>
    <lineage>
        <taxon>Bacteria</taxon>
        <taxon>Pseudomonadati</taxon>
        <taxon>Pseudomonadota</taxon>
        <taxon>Gammaproteobacteria</taxon>
        <taxon>Pseudomonadales</taxon>
        <taxon>Pseudomonadaceae</taxon>
        <taxon>Pseudomonas</taxon>
    </lineage>
</organism>
<protein>
    <recommendedName>
        <fullName evidence="1">Peptide methionine sulfoxide reductase MsrB</fullName>
        <ecNumber evidence="1">1.8.4.12</ecNumber>
    </recommendedName>
    <alternativeName>
        <fullName evidence="1">Peptide-methionine (R)-S-oxide reductase</fullName>
    </alternativeName>
</protein>
<dbReference type="EC" id="1.8.4.12" evidence="1"/>
<dbReference type="EMBL" id="CP000438">
    <property type="protein sequence ID" value="ABJ12067.1"/>
    <property type="molecule type" value="Genomic_DNA"/>
</dbReference>
<dbReference type="RefSeq" id="WP_003090911.1">
    <property type="nucleotide sequence ID" value="NZ_CP034244.1"/>
</dbReference>
<dbReference type="SMR" id="Q02NZ0"/>
<dbReference type="KEGG" id="pau:PA14_27510"/>
<dbReference type="PseudoCAP" id="PA14_27510"/>
<dbReference type="HOGENOM" id="CLU_031040_8_5_6"/>
<dbReference type="BioCyc" id="PAER208963:G1G74-2286-MONOMER"/>
<dbReference type="Proteomes" id="UP000000653">
    <property type="component" value="Chromosome"/>
</dbReference>
<dbReference type="GO" id="GO:0005737">
    <property type="term" value="C:cytoplasm"/>
    <property type="evidence" value="ECO:0007669"/>
    <property type="project" value="TreeGrafter"/>
</dbReference>
<dbReference type="GO" id="GO:0033743">
    <property type="term" value="F:peptide-methionine (R)-S-oxide reductase activity"/>
    <property type="evidence" value="ECO:0007669"/>
    <property type="project" value="UniProtKB-UniRule"/>
</dbReference>
<dbReference type="GO" id="GO:0008270">
    <property type="term" value="F:zinc ion binding"/>
    <property type="evidence" value="ECO:0007669"/>
    <property type="project" value="UniProtKB-UniRule"/>
</dbReference>
<dbReference type="GO" id="GO:0030091">
    <property type="term" value="P:protein repair"/>
    <property type="evidence" value="ECO:0007669"/>
    <property type="project" value="InterPro"/>
</dbReference>
<dbReference type="GO" id="GO:0006979">
    <property type="term" value="P:response to oxidative stress"/>
    <property type="evidence" value="ECO:0007669"/>
    <property type="project" value="InterPro"/>
</dbReference>
<dbReference type="FunFam" id="2.170.150.20:FF:000001">
    <property type="entry name" value="Peptide methionine sulfoxide reductase MsrB"/>
    <property type="match status" value="1"/>
</dbReference>
<dbReference type="Gene3D" id="2.170.150.20">
    <property type="entry name" value="Peptide methionine sulfoxide reductase"/>
    <property type="match status" value="1"/>
</dbReference>
<dbReference type="HAMAP" id="MF_01400">
    <property type="entry name" value="MsrB"/>
    <property type="match status" value="1"/>
</dbReference>
<dbReference type="InterPro" id="IPR028427">
    <property type="entry name" value="Met_Sox_Rdtase_MsrB"/>
</dbReference>
<dbReference type="InterPro" id="IPR002579">
    <property type="entry name" value="Met_Sox_Rdtase_MsrB_dom"/>
</dbReference>
<dbReference type="InterPro" id="IPR011057">
    <property type="entry name" value="Mss4-like_sf"/>
</dbReference>
<dbReference type="NCBIfam" id="TIGR00357">
    <property type="entry name" value="peptide-methionine (R)-S-oxide reductase MsrB"/>
    <property type="match status" value="1"/>
</dbReference>
<dbReference type="PANTHER" id="PTHR10173">
    <property type="entry name" value="METHIONINE SULFOXIDE REDUCTASE"/>
    <property type="match status" value="1"/>
</dbReference>
<dbReference type="PANTHER" id="PTHR10173:SF52">
    <property type="entry name" value="METHIONINE-R-SULFOXIDE REDUCTASE B1"/>
    <property type="match status" value="1"/>
</dbReference>
<dbReference type="Pfam" id="PF01641">
    <property type="entry name" value="SelR"/>
    <property type="match status" value="1"/>
</dbReference>
<dbReference type="SUPFAM" id="SSF51316">
    <property type="entry name" value="Mss4-like"/>
    <property type="match status" value="1"/>
</dbReference>
<dbReference type="PROSITE" id="PS51790">
    <property type="entry name" value="MSRB"/>
    <property type="match status" value="1"/>
</dbReference>
<accession>Q02NZ0</accession>
<name>MSRB_PSEAB</name>
<gene>
    <name evidence="1" type="primary">msrB</name>
    <name type="ordered locus">PA14_27510</name>
</gene>